<proteinExistence type="evidence at protein level"/>
<accession>P20241</accession>
<accession>A4V452</accession>
<accession>E1JJF8</accession>
<accession>E1JJF9</accession>
<accession>O61541</accession>
<accession>O61542</accession>
<accession>Q1WWD5</accession>
<accession>Q24414</accession>
<accession>Q24415</accession>
<accession>Q95U64</accession>
<accession>Q9V3X0</accession>
<reference key="1">
    <citation type="journal article" date="1989" name="Cell">
        <title>Drosophila neuroglian: a member of the immunoglobulin superfamily with extensive homology to the vertebrate neural adhesion molecule L1.</title>
        <authorList>
            <person name="Bieber A.J."/>
            <person name="Snow P.M."/>
            <person name="Hortsch M."/>
            <person name="Patel N.H."/>
            <person name="Jacobs J.R."/>
            <person name="Traquina Z.R."/>
            <person name="Schilling J."/>
            <person name="Goodman C.S."/>
        </authorList>
    </citation>
    <scope>NUCLEOTIDE SEQUENCE [MRNA] (ISOFORM A)</scope>
    <scope>PROTEIN SEQUENCE OF 24-41 AND 737-751</scope>
</reference>
<reference key="2">
    <citation type="journal article" date="1998" name="Gene">
        <title>The analysis of genomic structures in the L1 family of cell adhesion molecules provides no evidence for exon shuffling events after the separation of arthropod and chordate lineages.</title>
        <authorList>
            <person name="Zhao G."/>
            <person name="Hortsch M."/>
        </authorList>
    </citation>
    <scope>NUCLEOTIDE SEQUENCE [GENOMIC DNA]</scope>
    <scope>ALTERNATIVE SPLICING (ISOFORMS A AND B)</scope>
</reference>
<reference key="3">
    <citation type="submission" date="2000-01" db="EMBL/GenBank/DDBJ databases">
        <authorList>
            <person name="Hortsch M."/>
        </authorList>
    </citation>
    <scope>SEQUENCE REVISION</scope>
</reference>
<reference key="4">
    <citation type="journal article" date="2000" name="Science">
        <title>The genome sequence of Drosophila melanogaster.</title>
        <authorList>
            <person name="Adams M.D."/>
            <person name="Celniker S.E."/>
            <person name="Holt R.A."/>
            <person name="Evans C.A."/>
            <person name="Gocayne J.D."/>
            <person name="Amanatides P.G."/>
            <person name="Scherer S.E."/>
            <person name="Li P.W."/>
            <person name="Hoskins R.A."/>
            <person name="Galle R.F."/>
            <person name="George R.A."/>
            <person name="Lewis S.E."/>
            <person name="Richards S."/>
            <person name="Ashburner M."/>
            <person name="Henderson S.N."/>
            <person name="Sutton G.G."/>
            <person name="Wortman J.R."/>
            <person name="Yandell M.D."/>
            <person name="Zhang Q."/>
            <person name="Chen L.X."/>
            <person name="Brandon R.C."/>
            <person name="Rogers Y.-H.C."/>
            <person name="Blazej R.G."/>
            <person name="Champe M."/>
            <person name="Pfeiffer B.D."/>
            <person name="Wan K.H."/>
            <person name="Doyle C."/>
            <person name="Baxter E.G."/>
            <person name="Helt G."/>
            <person name="Nelson C.R."/>
            <person name="Miklos G.L.G."/>
            <person name="Abril J.F."/>
            <person name="Agbayani A."/>
            <person name="An H.-J."/>
            <person name="Andrews-Pfannkoch C."/>
            <person name="Baldwin D."/>
            <person name="Ballew R.M."/>
            <person name="Basu A."/>
            <person name="Baxendale J."/>
            <person name="Bayraktaroglu L."/>
            <person name="Beasley E.M."/>
            <person name="Beeson K.Y."/>
            <person name="Benos P.V."/>
            <person name="Berman B.P."/>
            <person name="Bhandari D."/>
            <person name="Bolshakov S."/>
            <person name="Borkova D."/>
            <person name="Botchan M.R."/>
            <person name="Bouck J."/>
            <person name="Brokstein P."/>
            <person name="Brottier P."/>
            <person name="Burtis K.C."/>
            <person name="Busam D.A."/>
            <person name="Butler H."/>
            <person name="Cadieu E."/>
            <person name="Center A."/>
            <person name="Chandra I."/>
            <person name="Cherry J.M."/>
            <person name="Cawley S."/>
            <person name="Dahlke C."/>
            <person name="Davenport L.B."/>
            <person name="Davies P."/>
            <person name="de Pablos B."/>
            <person name="Delcher A."/>
            <person name="Deng Z."/>
            <person name="Mays A.D."/>
            <person name="Dew I."/>
            <person name="Dietz S.M."/>
            <person name="Dodson K."/>
            <person name="Doup L.E."/>
            <person name="Downes M."/>
            <person name="Dugan-Rocha S."/>
            <person name="Dunkov B.C."/>
            <person name="Dunn P."/>
            <person name="Durbin K.J."/>
            <person name="Evangelista C.C."/>
            <person name="Ferraz C."/>
            <person name="Ferriera S."/>
            <person name="Fleischmann W."/>
            <person name="Fosler C."/>
            <person name="Gabrielian A.E."/>
            <person name="Garg N.S."/>
            <person name="Gelbart W.M."/>
            <person name="Glasser K."/>
            <person name="Glodek A."/>
            <person name="Gong F."/>
            <person name="Gorrell J.H."/>
            <person name="Gu Z."/>
            <person name="Guan P."/>
            <person name="Harris M."/>
            <person name="Harris N.L."/>
            <person name="Harvey D.A."/>
            <person name="Heiman T.J."/>
            <person name="Hernandez J.R."/>
            <person name="Houck J."/>
            <person name="Hostin D."/>
            <person name="Houston K.A."/>
            <person name="Howland T.J."/>
            <person name="Wei M.-H."/>
            <person name="Ibegwam C."/>
            <person name="Jalali M."/>
            <person name="Kalush F."/>
            <person name="Karpen G.H."/>
            <person name="Ke Z."/>
            <person name="Kennison J.A."/>
            <person name="Ketchum K.A."/>
            <person name="Kimmel B.E."/>
            <person name="Kodira C.D."/>
            <person name="Kraft C.L."/>
            <person name="Kravitz S."/>
            <person name="Kulp D."/>
            <person name="Lai Z."/>
            <person name="Lasko P."/>
            <person name="Lei Y."/>
            <person name="Levitsky A.A."/>
            <person name="Li J.H."/>
            <person name="Li Z."/>
            <person name="Liang Y."/>
            <person name="Lin X."/>
            <person name="Liu X."/>
            <person name="Mattei B."/>
            <person name="McIntosh T.C."/>
            <person name="McLeod M.P."/>
            <person name="McPherson D."/>
            <person name="Merkulov G."/>
            <person name="Milshina N.V."/>
            <person name="Mobarry C."/>
            <person name="Morris J."/>
            <person name="Moshrefi A."/>
            <person name="Mount S.M."/>
            <person name="Moy M."/>
            <person name="Murphy B."/>
            <person name="Murphy L."/>
            <person name="Muzny D.M."/>
            <person name="Nelson D.L."/>
            <person name="Nelson D.R."/>
            <person name="Nelson K.A."/>
            <person name="Nixon K."/>
            <person name="Nusskern D.R."/>
            <person name="Pacleb J.M."/>
            <person name="Palazzolo M."/>
            <person name="Pittman G.S."/>
            <person name="Pan S."/>
            <person name="Pollard J."/>
            <person name="Puri V."/>
            <person name="Reese M.G."/>
            <person name="Reinert K."/>
            <person name="Remington K."/>
            <person name="Saunders R.D.C."/>
            <person name="Scheeler F."/>
            <person name="Shen H."/>
            <person name="Shue B.C."/>
            <person name="Siden-Kiamos I."/>
            <person name="Simpson M."/>
            <person name="Skupski M.P."/>
            <person name="Smith T.J."/>
            <person name="Spier E."/>
            <person name="Spradling A.C."/>
            <person name="Stapleton M."/>
            <person name="Strong R."/>
            <person name="Sun E."/>
            <person name="Svirskas R."/>
            <person name="Tector C."/>
            <person name="Turner R."/>
            <person name="Venter E."/>
            <person name="Wang A.H."/>
            <person name="Wang X."/>
            <person name="Wang Z.-Y."/>
            <person name="Wassarman D.A."/>
            <person name="Weinstock G.M."/>
            <person name="Weissenbach J."/>
            <person name="Williams S.M."/>
            <person name="Woodage T."/>
            <person name="Worley K.C."/>
            <person name="Wu D."/>
            <person name="Yang S."/>
            <person name="Yao Q.A."/>
            <person name="Ye J."/>
            <person name="Yeh R.-F."/>
            <person name="Zaveri J.S."/>
            <person name="Zhan M."/>
            <person name="Zhang G."/>
            <person name="Zhao Q."/>
            <person name="Zheng L."/>
            <person name="Zheng X.H."/>
            <person name="Zhong F.N."/>
            <person name="Zhong W."/>
            <person name="Zhou X."/>
            <person name="Zhu S.C."/>
            <person name="Zhu X."/>
            <person name="Smith H.O."/>
            <person name="Gibbs R.A."/>
            <person name="Myers E.W."/>
            <person name="Rubin G.M."/>
            <person name="Venter J.C."/>
        </authorList>
    </citation>
    <scope>NUCLEOTIDE SEQUENCE [LARGE SCALE GENOMIC DNA]</scope>
    <source>
        <strain>Berkeley</strain>
    </source>
</reference>
<reference key="5">
    <citation type="journal article" date="2002" name="Genome Biol.">
        <title>Annotation of the Drosophila melanogaster euchromatic genome: a systematic review.</title>
        <authorList>
            <person name="Misra S."/>
            <person name="Crosby M.A."/>
            <person name="Mungall C.J."/>
            <person name="Matthews B.B."/>
            <person name="Campbell K.S."/>
            <person name="Hradecky P."/>
            <person name="Huang Y."/>
            <person name="Kaminker J.S."/>
            <person name="Millburn G.H."/>
            <person name="Prochnik S.E."/>
            <person name="Smith C.D."/>
            <person name="Tupy J.L."/>
            <person name="Whitfield E.J."/>
            <person name="Bayraktaroglu L."/>
            <person name="Berman B.P."/>
            <person name="Bettencourt B.R."/>
            <person name="Celniker S.E."/>
            <person name="de Grey A.D.N.J."/>
            <person name="Drysdale R.A."/>
            <person name="Harris N.L."/>
            <person name="Richter J."/>
            <person name="Russo S."/>
            <person name="Schroeder A.J."/>
            <person name="Shu S.Q."/>
            <person name="Stapleton M."/>
            <person name="Yamada C."/>
            <person name="Ashburner M."/>
            <person name="Gelbart W.M."/>
            <person name="Rubin G.M."/>
            <person name="Lewis S.E."/>
        </authorList>
    </citation>
    <scope>GENOME REANNOTATION</scope>
    <source>
        <strain>Berkeley</strain>
    </source>
</reference>
<reference key="6">
    <citation type="journal article" date="2002" name="Genome Biol.">
        <title>A Drosophila full-length cDNA resource.</title>
        <authorList>
            <person name="Stapleton M."/>
            <person name="Carlson J.W."/>
            <person name="Brokstein P."/>
            <person name="Yu C."/>
            <person name="Champe M."/>
            <person name="George R.A."/>
            <person name="Guarin H."/>
            <person name="Kronmiller B."/>
            <person name="Pacleb J.M."/>
            <person name="Park S."/>
            <person name="Wan K.H."/>
            <person name="Rubin G.M."/>
            <person name="Celniker S.E."/>
        </authorList>
    </citation>
    <scope>NUCLEOTIDE SEQUENCE [LARGE SCALE MRNA] (ISOFORM A)</scope>
    <source>
        <strain>Berkeley</strain>
        <tissue>Head</tissue>
    </source>
</reference>
<reference key="7">
    <citation type="submission" date="2006-03" db="EMBL/GenBank/DDBJ databases">
        <authorList>
            <person name="Stapleton M."/>
            <person name="Carlson J.W."/>
            <person name="Chavez C."/>
            <person name="Frise E."/>
            <person name="George R.A."/>
            <person name="Pacleb J.M."/>
            <person name="Park S."/>
            <person name="Wan K.H."/>
            <person name="Yu C."/>
            <person name="Celniker S.E."/>
        </authorList>
    </citation>
    <scope>NUCLEOTIDE SEQUENCE [LARGE SCALE MRNA] OF 1088-1302</scope>
    <source>
        <strain>Berkeley</strain>
    </source>
</reference>
<reference key="8">
    <citation type="journal article" date="1990" name="Neuron">
        <title>Differential splicing generates a nervous system-specific form of Drosophila neuroglian.</title>
        <authorList>
            <person name="Hortsch M."/>
            <person name="Bieber A.J."/>
            <person name="Patel N.H."/>
            <person name="Goodman C.S."/>
        </authorList>
    </citation>
    <scope>NUCLEOTIDE SEQUENCE [MRNA] OF 1182-1302 (ISOFORMS A AND B)</scope>
    <scope>FUNCTION</scope>
    <scope>TISSUE SPECIFICITY</scope>
    <source>
        <tissue>Embryo</tissue>
    </source>
</reference>
<reference key="9">
    <citation type="journal article" date="2004" name="Development">
        <title>Drosophila contactin, a homolog of vertebrate contactin, is required for septate junction organization and paracellular barrier function.</title>
        <authorList>
            <person name="Faivre-Sarrailh C."/>
            <person name="Banerjee S."/>
            <person name="Li J."/>
            <person name="Hortsch M."/>
            <person name="Laval M."/>
            <person name="Bhat M.A."/>
        </authorList>
    </citation>
    <scope>IDENTIFICATION IN A COMPLEX WITH NRX-IV AND CONT</scope>
</reference>
<reference key="10">
    <citation type="journal article" date="2007" name="Glycobiology">
        <title>Identification of N-glycosylated proteins from the central nervous system of Drosophila melanogaster.</title>
        <authorList>
            <person name="Koles K."/>
            <person name="Lim J.-M."/>
            <person name="Aoki K."/>
            <person name="Porterfield M."/>
            <person name="Tiemeyer M."/>
            <person name="Wells L."/>
            <person name="Panin V."/>
        </authorList>
    </citation>
    <scope>GLYCOSYLATION [LARGE SCALE ANALYSIS] AT ASN-198 AND ASN-411</scope>
    <scope>IDENTIFICATION BY MASS SPECTROMETRY</scope>
    <source>
        <strain>Oregon-R</strain>
        <tissue>Head</tissue>
    </source>
</reference>
<reference key="11">
    <citation type="journal article" date="2009" name="Nat. Biotechnol.">
        <title>Mass-spectrometric identification and relative quantification of N-linked cell surface glycoproteins.</title>
        <authorList>
            <person name="Wollscheid B."/>
            <person name="Bausch-Fluck D."/>
            <person name="Henderson C."/>
            <person name="O'Brien R."/>
            <person name="Bibel M."/>
            <person name="Schiess R."/>
            <person name="Aebersold R."/>
            <person name="Watts J.D."/>
        </authorList>
    </citation>
    <scope>GLYCOSYLATION [LARGE SCALE ANALYSIS] AT ASN-411</scope>
    <scope>IDENTIFICATION BY MASS SPECTROMETRY</scope>
</reference>
<reference key="12">
    <citation type="journal article" date="2010" name="Nat. Cell Biol.">
        <title>Epithelial septate junction assembly relies on melanotransferrin iron binding and endocytosis in Drosophila.</title>
        <authorList>
            <person name="Tiklova K."/>
            <person name="Senti K.A."/>
            <person name="Wang S."/>
            <person name="Graeslund A."/>
            <person name="Samakovlis C."/>
        </authorList>
    </citation>
    <scope>IDENTIFICATION IN A COMPLEX WITH TSF2; CONT AND NRX-IV</scope>
    <scope>SUBCELLULAR LOCATION</scope>
    <scope>DEVELOPMENTAL STAGE</scope>
</reference>
<reference key="13">
    <citation type="journal article" date="2017" name="PLoS ONE">
        <title>Boudin trafficking reveals the dynamic internalisation of specific septate junction components in Drosophila.</title>
        <authorList>
            <person name="Tempesta C."/>
            <person name="Hijazi A."/>
            <person name="Moussian B."/>
            <person name="Roch F."/>
        </authorList>
    </citation>
    <scope>FUNCTION</scope>
</reference>
<reference key="14">
    <citation type="journal article" date="1994" name="Neuron">
        <title>Crystal structure of tandem type III fibronectin domains from Drosophila neuroglian at 2.0 A.</title>
        <authorList>
            <person name="Huber A.H."/>
            <person name="Wang Y.-M.E."/>
            <person name="Bieber A.J."/>
            <person name="Bjorkman P.J."/>
        </authorList>
    </citation>
    <scope>X-RAY CRYSTALLOGRAPHY (2.0 ANGSTROMS) OF 610-814</scope>
    <scope>DISULFIDE BONDS</scope>
    <scope>GLYCOSYLATION AT ASN-652 AND ASN-683</scope>
</reference>
<feature type="signal peptide" evidence="11">
    <location>
        <begin position="1"/>
        <end position="23"/>
    </location>
</feature>
<feature type="chain" id="PRO_0000015055" description="Neuroglian">
    <location>
        <begin position="24"/>
        <end position="1302"/>
    </location>
</feature>
<feature type="topological domain" description="Extracellular" evidence="2">
    <location>
        <begin position="24"/>
        <end position="1138"/>
    </location>
</feature>
<feature type="transmembrane region" description="Helical" evidence="2">
    <location>
        <begin position="1139"/>
        <end position="1154"/>
    </location>
</feature>
<feature type="topological domain" description="Cytoplasmic" evidence="2">
    <location>
        <begin position="1155"/>
        <end position="1302"/>
    </location>
</feature>
<feature type="domain" description="Ig-like C2-type 1">
    <location>
        <begin position="29"/>
        <end position="133"/>
    </location>
</feature>
<feature type="domain" description="Ig-like C2-type 2">
    <location>
        <begin position="134"/>
        <end position="225"/>
    </location>
</feature>
<feature type="domain" description="Ig-like C2-type 3">
    <location>
        <begin position="245"/>
        <end position="330"/>
    </location>
</feature>
<feature type="domain" description="Ig-like C2-type 4">
    <location>
        <begin position="339"/>
        <end position="426"/>
    </location>
</feature>
<feature type="domain" description="Ig-like C2-type 5">
    <location>
        <begin position="432"/>
        <end position="524"/>
    </location>
</feature>
<feature type="domain" description="Ig-like C2-type 6">
    <location>
        <begin position="521"/>
        <end position="610"/>
    </location>
</feature>
<feature type="domain" description="Fibronectin type-III 1" evidence="4">
    <location>
        <begin position="614"/>
        <end position="711"/>
    </location>
</feature>
<feature type="domain" description="Fibronectin type-III 2" evidence="4">
    <location>
        <begin position="716"/>
        <end position="813"/>
    </location>
</feature>
<feature type="domain" description="Fibronectin type-III 3" evidence="4">
    <location>
        <begin position="818"/>
        <end position="915"/>
    </location>
</feature>
<feature type="domain" description="Fibronectin type-III 4" evidence="4">
    <location>
        <begin position="916"/>
        <end position="1017"/>
    </location>
</feature>
<feature type="domain" description="Fibronectin type-III 5" evidence="4">
    <location>
        <begin position="1021"/>
        <end position="1119"/>
    </location>
</feature>
<feature type="region of interest" description="Disordered" evidence="5">
    <location>
        <begin position="1172"/>
        <end position="1223"/>
    </location>
</feature>
<feature type="region of interest" description="Disordered" evidence="5">
    <location>
        <begin position="1236"/>
        <end position="1291"/>
    </location>
</feature>
<feature type="compositionally biased region" description="Basic and acidic residues" evidence="5">
    <location>
        <begin position="1172"/>
        <end position="1182"/>
    </location>
</feature>
<feature type="compositionally biased region" description="Polar residues" evidence="5">
    <location>
        <begin position="1188"/>
        <end position="1203"/>
    </location>
</feature>
<feature type="compositionally biased region" description="Low complexity" evidence="5">
    <location>
        <begin position="1253"/>
        <end position="1275"/>
    </location>
</feature>
<feature type="glycosylation site" description="N-linked (GlcNAc...) asparagine" evidence="2">
    <location>
        <position position="182"/>
    </location>
</feature>
<feature type="glycosylation site" description="N-linked (GlcNAc...) asparagine" evidence="8">
    <location>
        <position position="198"/>
    </location>
</feature>
<feature type="glycosylation site" description="N-linked (GlcNAc...) asparagine" evidence="8 9">
    <location>
        <position position="411"/>
    </location>
</feature>
<feature type="glycosylation site" description="N-linked (GlcNAc...) asparagine" evidence="2">
    <location>
        <position position="448"/>
    </location>
</feature>
<feature type="glycosylation site" description="N-linked (GlcNAc...) asparagine" evidence="13">
    <location>
        <position position="652"/>
    </location>
</feature>
<feature type="glycosylation site" description="N-linked (GlcNAc...) asparagine" evidence="13">
    <location>
        <position position="683"/>
    </location>
</feature>
<feature type="glycosylation site" description="N-linked (GlcNAc...) asparagine" evidence="2">
    <location>
        <position position="821"/>
    </location>
</feature>
<feature type="glycosylation site" description="N-linked (GlcNAc...) asparagine" evidence="2">
    <location>
        <position position="1125"/>
    </location>
</feature>
<feature type="disulfide bond" evidence="3">
    <location>
        <begin position="59"/>
        <end position="111"/>
    </location>
</feature>
<feature type="disulfide bond" evidence="1">
    <location>
        <begin position="155"/>
        <end position="212"/>
    </location>
</feature>
<feature type="disulfide bond" evidence="1">
    <location>
        <begin position="268"/>
        <end position="317"/>
    </location>
</feature>
<feature type="disulfide bond" evidence="1">
    <location>
        <begin position="360"/>
        <end position="410"/>
    </location>
</feature>
<feature type="disulfide bond" evidence="3 13">
    <location>
        <begin position="625"/>
        <end position="706"/>
    </location>
</feature>
<feature type="splice variant" id="VSP_002601" description="In isoform A." evidence="14 15 16">
    <original>QFTEDGSFIGQYVPGK</original>
    <variation>MNEDGSFIGQYGRKGL</variation>
    <location>
        <begin position="1224"/>
        <end position="1239"/>
    </location>
</feature>
<feature type="splice variant" id="VSP_002602" description="In isoform A." evidence="14 15 16">
    <location>
        <begin position="1240"/>
        <end position="1302"/>
    </location>
</feature>
<feature type="sequence conflict" description="In Ref. 2; AAC28613/AAC28614." evidence="17" ref="2">
    <original>NR</original>
    <variation>KP</variation>
    <location>
        <begin position="85"/>
        <end position="86"/>
    </location>
</feature>
<feature type="sequence conflict" description="In Ref. 7; ABE01201." evidence="17" ref="7">
    <location>
        <position position="1232"/>
    </location>
</feature>
<feature type="sequence conflict" description="In Ref. 8; CAA53823." evidence="17" ref="8">
    <location>
        <position position="1282"/>
    </location>
</feature>
<feature type="sequence conflict" description="In Ref. 7; ABE01201." evidence="17" ref="7">
    <original>A</original>
    <variation>V</variation>
    <location>
        <position position="1299"/>
    </location>
</feature>
<feature type="strand" evidence="19">
    <location>
        <begin position="619"/>
        <end position="625"/>
    </location>
</feature>
<feature type="strand" evidence="19">
    <location>
        <begin position="627"/>
        <end position="635"/>
    </location>
</feature>
<feature type="strand" evidence="19">
    <location>
        <begin position="646"/>
        <end position="656"/>
    </location>
</feature>
<feature type="strand" evidence="19">
    <location>
        <begin position="661"/>
        <end position="668"/>
    </location>
</feature>
<feature type="strand" evidence="19">
    <location>
        <begin position="672"/>
        <end position="677"/>
    </location>
</feature>
<feature type="strand" evidence="19">
    <location>
        <begin position="680"/>
        <end position="692"/>
    </location>
</feature>
<feature type="strand" evidence="19">
    <location>
        <begin position="706"/>
        <end position="708"/>
    </location>
</feature>
<feature type="strand" evidence="19">
    <location>
        <begin position="721"/>
        <end position="723"/>
    </location>
</feature>
<feature type="strand" evidence="19">
    <location>
        <begin position="730"/>
        <end position="733"/>
    </location>
</feature>
<feature type="helix" evidence="19">
    <location>
        <begin position="739"/>
        <end position="741"/>
    </location>
</feature>
<feature type="strand" evidence="19">
    <location>
        <begin position="744"/>
        <end position="746"/>
    </location>
</feature>
<feature type="strand" evidence="19">
    <location>
        <begin position="748"/>
        <end position="757"/>
    </location>
</feature>
<feature type="strand" evidence="19">
    <location>
        <begin position="763"/>
        <end position="767"/>
    </location>
</feature>
<feature type="strand" evidence="19">
    <location>
        <begin position="774"/>
        <end position="777"/>
    </location>
</feature>
<feature type="strand" evidence="19">
    <location>
        <begin position="785"/>
        <end position="794"/>
    </location>
</feature>
<feature type="strand" evidence="19">
    <location>
        <begin position="806"/>
        <end position="812"/>
    </location>
</feature>
<keyword id="KW-0002">3D-structure</keyword>
<keyword id="KW-0025">Alternative splicing</keyword>
<keyword id="KW-0130">Cell adhesion</keyword>
<keyword id="KW-0965">Cell junction</keyword>
<keyword id="KW-1003">Cell membrane</keyword>
<keyword id="KW-0217">Developmental protein</keyword>
<keyword id="KW-0903">Direct protein sequencing</keyword>
<keyword id="KW-1015">Disulfide bond</keyword>
<keyword id="KW-0325">Glycoprotein</keyword>
<keyword id="KW-0393">Immunoglobulin domain</keyword>
<keyword id="KW-0472">Membrane</keyword>
<keyword id="KW-1185">Reference proteome</keyword>
<keyword id="KW-0677">Repeat</keyword>
<keyword id="KW-0732">Signal</keyword>
<keyword id="KW-0812">Transmembrane</keyword>
<keyword id="KW-1133">Transmembrane helix</keyword>
<dbReference type="EMBL" id="M28231">
    <property type="protein sequence ID" value="AAA28728.2"/>
    <property type="molecule type" value="mRNA"/>
</dbReference>
<dbReference type="EMBL" id="AF050085">
    <property type="protein sequence ID" value="AAC28613.2"/>
    <property type="molecule type" value="Genomic_DNA"/>
</dbReference>
<dbReference type="EMBL" id="AF050084">
    <property type="protein sequence ID" value="AAC28613.2"/>
    <property type="status" value="JOINED"/>
    <property type="molecule type" value="Genomic_DNA"/>
</dbReference>
<dbReference type="EMBL" id="AF050085">
    <property type="protein sequence ID" value="AAC28614.2"/>
    <property type="molecule type" value="Genomic_DNA"/>
</dbReference>
<dbReference type="EMBL" id="AF050084">
    <property type="protein sequence ID" value="AAC28614.2"/>
    <property type="status" value="JOINED"/>
    <property type="molecule type" value="Genomic_DNA"/>
</dbReference>
<dbReference type="EMBL" id="AE014298">
    <property type="protein sequence ID" value="AAF46387.1"/>
    <property type="molecule type" value="Genomic_DNA"/>
</dbReference>
<dbReference type="EMBL" id="AE014298">
    <property type="protein sequence ID" value="AAN09236.1"/>
    <property type="molecule type" value="Genomic_DNA"/>
</dbReference>
<dbReference type="EMBL" id="AE014298">
    <property type="protein sequence ID" value="AAS65287.1"/>
    <property type="molecule type" value="Genomic_DNA"/>
</dbReference>
<dbReference type="EMBL" id="AE014298">
    <property type="protein sequence ID" value="ACZ95239.1"/>
    <property type="molecule type" value="Genomic_DNA"/>
</dbReference>
<dbReference type="EMBL" id="AE014298">
    <property type="protein sequence ID" value="ACZ95240.1"/>
    <property type="molecule type" value="Genomic_DNA"/>
</dbReference>
<dbReference type="EMBL" id="AE014298">
    <property type="protein sequence ID" value="ACZ95241.1"/>
    <property type="molecule type" value="Genomic_DNA"/>
</dbReference>
<dbReference type="EMBL" id="AE014298">
    <property type="protein sequence ID" value="AGB95180.1"/>
    <property type="molecule type" value="Genomic_DNA"/>
</dbReference>
<dbReference type="EMBL" id="AE014298">
    <property type="protein sequence ID" value="AGB95181.1"/>
    <property type="molecule type" value="Genomic_DNA"/>
</dbReference>
<dbReference type="EMBL" id="AY058284">
    <property type="protein sequence ID" value="AAL13513.1"/>
    <property type="molecule type" value="mRNA"/>
</dbReference>
<dbReference type="EMBL" id="BT024971">
    <property type="protein sequence ID" value="ABE01201.1"/>
    <property type="molecule type" value="mRNA"/>
</dbReference>
<dbReference type="EMBL" id="X76243">
    <property type="protein sequence ID" value="CAA53822.1"/>
    <property type="molecule type" value="mRNA"/>
</dbReference>
<dbReference type="EMBL" id="X76244">
    <property type="protein sequence ID" value="CAA53823.1"/>
    <property type="molecule type" value="mRNA"/>
</dbReference>
<dbReference type="PIR" id="A32579">
    <property type="entry name" value="A32579"/>
</dbReference>
<dbReference type="RefSeq" id="NP_001162704.1">
    <molecule id="P20241-2"/>
    <property type="nucleotide sequence ID" value="NM_001169233.2"/>
</dbReference>
<dbReference type="RefSeq" id="NP_001162705.1">
    <molecule id="P20241-1"/>
    <property type="nucleotide sequence ID" value="NM_001169234.3"/>
</dbReference>
<dbReference type="RefSeq" id="NP_001162706.1">
    <molecule id="P20241-2"/>
    <property type="nucleotide sequence ID" value="NM_001169235.1"/>
</dbReference>
<dbReference type="RefSeq" id="NP_001259336.1">
    <molecule id="P20241-2"/>
    <property type="nucleotide sequence ID" value="NM_001272407.2"/>
</dbReference>
<dbReference type="RefSeq" id="NP_001259337.1">
    <molecule id="P20241-1"/>
    <property type="nucleotide sequence ID" value="NM_001272408.1"/>
</dbReference>
<dbReference type="RefSeq" id="NP_511090.1">
    <molecule id="P20241-2"/>
    <property type="nucleotide sequence ID" value="NM_078535.3"/>
</dbReference>
<dbReference type="RefSeq" id="NP_727274.1">
    <molecule id="P20241-1"/>
    <property type="nucleotide sequence ID" value="NM_167160.2"/>
</dbReference>
<dbReference type="RefSeq" id="NP_996380.1">
    <molecule id="P20241-2"/>
    <property type="nucleotide sequence ID" value="NM_206657.4"/>
</dbReference>
<dbReference type="PDB" id="1CFB">
    <property type="method" value="X-ray"/>
    <property type="resolution" value="2.00 A"/>
    <property type="chains" value="A=610-814"/>
</dbReference>
<dbReference type="PDBsum" id="1CFB"/>
<dbReference type="SMR" id="P20241"/>
<dbReference type="BioGRID" id="58251">
    <property type="interactions" value="28"/>
</dbReference>
<dbReference type="DIP" id="DIP-22412N"/>
<dbReference type="FunCoup" id="P20241">
    <property type="interactions" value="425"/>
</dbReference>
<dbReference type="IntAct" id="P20241">
    <property type="interactions" value="79"/>
</dbReference>
<dbReference type="STRING" id="7227.FBpp0297081"/>
<dbReference type="TCDB" id="1.H.2.1.1">
    <property type="family name" value="the invertebrate pmp22-claudin (claudin2) family"/>
</dbReference>
<dbReference type="GlyCosmos" id="P20241">
    <property type="glycosylation" value="8 sites, No reported glycans"/>
</dbReference>
<dbReference type="GlyGen" id="P20241">
    <property type="glycosylation" value="9 sites"/>
</dbReference>
<dbReference type="iPTMnet" id="P20241"/>
<dbReference type="PaxDb" id="7227-FBpp0297081"/>
<dbReference type="DNASU" id="31792"/>
<dbReference type="EnsemblMetazoa" id="FBtr0071207">
    <molecule id="P20241-2"/>
    <property type="protein sequence ID" value="FBpp0071154"/>
    <property type="gene ID" value="FBgn0264975"/>
</dbReference>
<dbReference type="EnsemblMetazoa" id="FBtr0071208">
    <molecule id="P20241-1"/>
    <property type="protein sequence ID" value="FBpp0071155"/>
    <property type="gene ID" value="FBgn0264975"/>
</dbReference>
<dbReference type="EnsemblMetazoa" id="FBtr0071209">
    <molecule id="P20241-2"/>
    <property type="protein sequence ID" value="FBpp0089326"/>
    <property type="gene ID" value="FBgn0264975"/>
</dbReference>
<dbReference type="EnsemblMetazoa" id="FBtr0301762">
    <molecule id="P20241-2"/>
    <property type="protein sequence ID" value="FBpp0290976"/>
    <property type="gene ID" value="FBgn0264975"/>
</dbReference>
<dbReference type="EnsemblMetazoa" id="FBtr0301763">
    <molecule id="P20241-1"/>
    <property type="protein sequence ID" value="FBpp0290977"/>
    <property type="gene ID" value="FBgn0264975"/>
</dbReference>
<dbReference type="EnsemblMetazoa" id="FBtr0301764">
    <molecule id="P20241-2"/>
    <property type="protein sequence ID" value="FBpp0290978"/>
    <property type="gene ID" value="FBgn0264975"/>
</dbReference>
<dbReference type="EnsemblMetazoa" id="FBtr0333522">
    <molecule id="P20241-2"/>
    <property type="protein sequence ID" value="FBpp0305702"/>
    <property type="gene ID" value="FBgn0264975"/>
</dbReference>
<dbReference type="EnsemblMetazoa" id="FBtr0333523">
    <molecule id="P20241-1"/>
    <property type="protein sequence ID" value="FBpp0305703"/>
    <property type="gene ID" value="FBgn0264975"/>
</dbReference>
<dbReference type="GeneID" id="31792"/>
<dbReference type="KEGG" id="dme:Dmel_CG1634"/>
<dbReference type="UCSC" id="CG1634-RC">
    <property type="organism name" value="d. melanogaster"/>
</dbReference>
<dbReference type="AGR" id="FB:FBgn0264975"/>
<dbReference type="CTD" id="31792"/>
<dbReference type="FlyBase" id="FBgn0264975">
    <property type="gene designation" value="Nrg"/>
</dbReference>
<dbReference type="VEuPathDB" id="VectorBase:FBgn0264975"/>
<dbReference type="eggNOG" id="KOG3513">
    <property type="taxonomic scope" value="Eukaryota"/>
</dbReference>
<dbReference type="HOGENOM" id="CLU_005756_1_0_1"/>
<dbReference type="InParanoid" id="P20241"/>
<dbReference type="OrthoDB" id="6244967at2759"/>
<dbReference type="PhylomeDB" id="P20241"/>
<dbReference type="BioGRID-ORCS" id="31792">
    <property type="hits" value="0 hits in 3 CRISPR screens"/>
</dbReference>
<dbReference type="ChiTaRS" id="Nrg">
    <property type="organism name" value="fly"/>
</dbReference>
<dbReference type="EvolutionaryTrace" id="P20241"/>
<dbReference type="GenomeRNAi" id="31792"/>
<dbReference type="PRO" id="PR:P20241"/>
<dbReference type="Proteomes" id="UP000000803">
    <property type="component" value="Chromosome X"/>
</dbReference>
<dbReference type="Bgee" id="FBgn0264975">
    <property type="expression patterns" value="Expressed in subperineurial glial cell (Drosophila) in post-embryonic organism and 295 other cell types or tissues"/>
</dbReference>
<dbReference type="ExpressionAtlas" id="P20241">
    <property type="expression patterns" value="baseline and differential"/>
</dbReference>
<dbReference type="GO" id="GO:0030424">
    <property type="term" value="C:axon"/>
    <property type="evidence" value="ECO:0000314"/>
    <property type="project" value="FlyBase"/>
</dbReference>
<dbReference type="GO" id="GO:0030425">
    <property type="term" value="C:dendrite"/>
    <property type="evidence" value="ECO:0000314"/>
    <property type="project" value="FlyBase"/>
</dbReference>
<dbReference type="GO" id="GO:0030175">
    <property type="term" value="C:filopodium"/>
    <property type="evidence" value="ECO:0000314"/>
    <property type="project" value="FlyBase"/>
</dbReference>
<dbReference type="GO" id="GO:0016328">
    <property type="term" value="C:lateral plasma membrane"/>
    <property type="evidence" value="ECO:0000314"/>
    <property type="project" value="FlyBase"/>
</dbReference>
<dbReference type="GO" id="GO:0016020">
    <property type="term" value="C:membrane"/>
    <property type="evidence" value="ECO:0000315"/>
    <property type="project" value="FlyBase"/>
</dbReference>
<dbReference type="GO" id="GO:0043005">
    <property type="term" value="C:neuron projection"/>
    <property type="evidence" value="ECO:0000318"/>
    <property type="project" value="GO_Central"/>
</dbReference>
<dbReference type="GO" id="GO:0043025">
    <property type="term" value="C:neuronal cell body"/>
    <property type="evidence" value="ECO:0000314"/>
    <property type="project" value="FlyBase"/>
</dbReference>
<dbReference type="GO" id="GO:0005886">
    <property type="term" value="C:plasma membrane"/>
    <property type="evidence" value="ECO:0000314"/>
    <property type="project" value="UniProtKB"/>
</dbReference>
<dbReference type="GO" id="GO:0005919">
    <property type="term" value="C:pleated septate junction"/>
    <property type="evidence" value="ECO:0000314"/>
    <property type="project" value="FlyBase"/>
</dbReference>
<dbReference type="GO" id="GO:0005918">
    <property type="term" value="C:septate junction"/>
    <property type="evidence" value="ECO:0000314"/>
    <property type="project" value="FlyBase"/>
</dbReference>
<dbReference type="GO" id="GO:0005509">
    <property type="term" value="F:calcium ion binding"/>
    <property type="evidence" value="ECO:0000314"/>
    <property type="project" value="FlyBase"/>
</dbReference>
<dbReference type="GO" id="GO:0050839">
    <property type="term" value="F:cell adhesion molecule binding"/>
    <property type="evidence" value="ECO:0000353"/>
    <property type="project" value="FlyBase"/>
</dbReference>
<dbReference type="GO" id="GO:0008366">
    <property type="term" value="P:axon ensheathment"/>
    <property type="evidence" value="ECO:0000315"/>
    <property type="project" value="FlyBase"/>
</dbReference>
<dbReference type="GO" id="GO:0048675">
    <property type="term" value="P:axon extension"/>
    <property type="evidence" value="ECO:0000315"/>
    <property type="project" value="FlyBase"/>
</dbReference>
<dbReference type="GO" id="GO:0007409">
    <property type="term" value="P:axonogenesis"/>
    <property type="evidence" value="ECO:0000315"/>
    <property type="project" value="FlyBase"/>
</dbReference>
<dbReference type="GO" id="GO:0061343">
    <property type="term" value="P:cell adhesion involved in heart morphogenesis"/>
    <property type="evidence" value="ECO:0000315"/>
    <property type="project" value="FlyBase"/>
</dbReference>
<dbReference type="GO" id="GO:0098609">
    <property type="term" value="P:cell-cell adhesion"/>
    <property type="evidence" value="ECO:0000314"/>
    <property type="project" value="FlyBase"/>
</dbReference>
<dbReference type="GO" id="GO:0048036">
    <property type="term" value="P:central complex development"/>
    <property type="evidence" value="ECO:0000315"/>
    <property type="project" value="FlyBase"/>
</dbReference>
<dbReference type="GO" id="GO:0048813">
    <property type="term" value="P:dendrite morphogenesis"/>
    <property type="evidence" value="ECO:0000315"/>
    <property type="project" value="FlyBase"/>
</dbReference>
<dbReference type="GO" id="GO:0060857">
    <property type="term" value="P:establishment of glial blood-brain barrier"/>
    <property type="evidence" value="ECO:0000315"/>
    <property type="project" value="FlyBase"/>
</dbReference>
<dbReference type="GO" id="GO:0008050">
    <property type="term" value="P:female courtship behavior"/>
    <property type="evidence" value="ECO:0000315"/>
    <property type="project" value="FlyBase"/>
</dbReference>
<dbReference type="GO" id="GO:0007560">
    <property type="term" value="P:imaginal disc morphogenesis"/>
    <property type="evidence" value="ECO:0000315"/>
    <property type="project" value="UniProtKB"/>
</dbReference>
<dbReference type="GO" id="GO:0008049">
    <property type="term" value="P:male courtship behavior"/>
    <property type="evidence" value="ECO:0000315"/>
    <property type="project" value="FlyBase"/>
</dbReference>
<dbReference type="GO" id="GO:0035011">
    <property type="term" value="P:melanotic encapsulation of foreign target"/>
    <property type="evidence" value="ECO:0000315"/>
    <property type="project" value="FlyBase"/>
</dbReference>
<dbReference type="GO" id="GO:0008045">
    <property type="term" value="P:motor neuron axon guidance"/>
    <property type="evidence" value="ECO:0000315"/>
    <property type="project" value="FlyBase"/>
</dbReference>
<dbReference type="GO" id="GO:0016319">
    <property type="term" value="P:mushroom body development"/>
    <property type="evidence" value="ECO:0000315"/>
    <property type="project" value="FlyBase"/>
</dbReference>
<dbReference type="GO" id="GO:0021682">
    <property type="term" value="P:nerve maturation"/>
    <property type="evidence" value="ECO:0000315"/>
    <property type="project" value="FlyBase"/>
</dbReference>
<dbReference type="GO" id="GO:0007158">
    <property type="term" value="P:neuron cell-cell adhesion"/>
    <property type="evidence" value="ECO:0000315"/>
    <property type="project" value="UniProtKB"/>
</dbReference>
<dbReference type="GO" id="GO:0072499">
    <property type="term" value="P:photoreceptor cell axon guidance"/>
    <property type="evidence" value="ECO:0000315"/>
    <property type="project" value="FlyBase"/>
</dbReference>
<dbReference type="GO" id="GO:0045924">
    <property type="term" value="P:regulation of female receptivity"/>
    <property type="evidence" value="ECO:0000315"/>
    <property type="project" value="FlyBase"/>
</dbReference>
<dbReference type="GO" id="GO:0035151">
    <property type="term" value="P:regulation of tube size, open tracheal system"/>
    <property type="evidence" value="ECO:0000315"/>
    <property type="project" value="FlyBase"/>
</dbReference>
<dbReference type="GO" id="GO:0019991">
    <property type="term" value="P:septate junction assembly"/>
    <property type="evidence" value="ECO:0000315"/>
    <property type="project" value="FlyBase"/>
</dbReference>
<dbReference type="GO" id="GO:0050808">
    <property type="term" value="P:synapse organization"/>
    <property type="evidence" value="ECO:0000315"/>
    <property type="project" value="FlyBase"/>
</dbReference>
<dbReference type="CDD" id="cd00063">
    <property type="entry name" value="FN3"/>
    <property type="match status" value="5"/>
</dbReference>
<dbReference type="CDD" id="cd20978">
    <property type="entry name" value="IgI_4_hemolin-like"/>
    <property type="match status" value="1"/>
</dbReference>
<dbReference type="FunFam" id="2.60.40.10:FF:000035">
    <property type="entry name" value="Contactin 1"/>
    <property type="match status" value="1"/>
</dbReference>
<dbReference type="FunFam" id="2.60.40.10:FF:000047">
    <property type="entry name" value="Contactin 1"/>
    <property type="match status" value="1"/>
</dbReference>
<dbReference type="FunFam" id="2.60.40.10:FF:000004">
    <property type="entry name" value="DCC isoform 1"/>
    <property type="match status" value="1"/>
</dbReference>
<dbReference type="FunFam" id="2.60.40.10:FF:001928">
    <property type="entry name" value="neuroglian isoform X2"/>
    <property type="match status" value="1"/>
</dbReference>
<dbReference type="FunFam" id="2.60.40.10:FF:001718">
    <property type="entry name" value="Neuroglian, isoform D"/>
    <property type="match status" value="1"/>
</dbReference>
<dbReference type="FunFam" id="2.60.40.10:FF:002060">
    <property type="entry name" value="Neuroglian, isoform D"/>
    <property type="match status" value="1"/>
</dbReference>
<dbReference type="FunFam" id="2.60.40.10:FF:001687">
    <property type="entry name" value="Neuroglian, isoform E"/>
    <property type="match status" value="1"/>
</dbReference>
<dbReference type="FunFam" id="2.60.40.10:FF:000005">
    <property type="entry name" value="Neuronal cell adhesion molecule"/>
    <property type="match status" value="1"/>
</dbReference>
<dbReference type="FunFam" id="2.60.40.10:FF:000028">
    <property type="entry name" value="Neuronal cell adhesion molecule"/>
    <property type="match status" value="1"/>
</dbReference>
<dbReference type="FunFam" id="2.60.40.10:FF:000238">
    <property type="entry name" value="Neuronal cell adhesion molecule"/>
    <property type="match status" value="1"/>
</dbReference>
<dbReference type="Gene3D" id="2.60.40.10">
    <property type="entry name" value="Immunoglobulins"/>
    <property type="match status" value="11"/>
</dbReference>
<dbReference type="InterPro" id="IPR003961">
    <property type="entry name" value="FN3_dom"/>
</dbReference>
<dbReference type="InterPro" id="IPR036116">
    <property type="entry name" value="FN3_sf"/>
</dbReference>
<dbReference type="InterPro" id="IPR007110">
    <property type="entry name" value="Ig-like_dom"/>
</dbReference>
<dbReference type="InterPro" id="IPR036179">
    <property type="entry name" value="Ig-like_dom_sf"/>
</dbReference>
<dbReference type="InterPro" id="IPR013783">
    <property type="entry name" value="Ig-like_fold"/>
</dbReference>
<dbReference type="InterPro" id="IPR013098">
    <property type="entry name" value="Ig_I-set"/>
</dbReference>
<dbReference type="InterPro" id="IPR003599">
    <property type="entry name" value="Ig_sub"/>
</dbReference>
<dbReference type="InterPro" id="IPR003598">
    <property type="entry name" value="Ig_sub2"/>
</dbReference>
<dbReference type="InterPro" id="IPR013151">
    <property type="entry name" value="Immunoglobulin_dom"/>
</dbReference>
<dbReference type="InterPro" id="IPR026966">
    <property type="entry name" value="Neurofascin/L1/NrCAM_C"/>
</dbReference>
<dbReference type="PANTHER" id="PTHR44170:SF6">
    <property type="entry name" value="CONTACTIN"/>
    <property type="match status" value="1"/>
</dbReference>
<dbReference type="PANTHER" id="PTHR44170">
    <property type="entry name" value="PROTEIN SIDEKICK"/>
    <property type="match status" value="1"/>
</dbReference>
<dbReference type="Pfam" id="PF13882">
    <property type="entry name" value="Bravo_FIGEY"/>
    <property type="match status" value="1"/>
</dbReference>
<dbReference type="Pfam" id="PF00041">
    <property type="entry name" value="fn3"/>
    <property type="match status" value="3"/>
</dbReference>
<dbReference type="Pfam" id="PF07679">
    <property type="entry name" value="I-set"/>
    <property type="match status" value="2"/>
</dbReference>
<dbReference type="Pfam" id="PF00047">
    <property type="entry name" value="ig"/>
    <property type="match status" value="2"/>
</dbReference>
<dbReference type="Pfam" id="PF13927">
    <property type="entry name" value="Ig_3"/>
    <property type="match status" value="1"/>
</dbReference>
<dbReference type="SMART" id="SM00060">
    <property type="entry name" value="FN3"/>
    <property type="match status" value="5"/>
</dbReference>
<dbReference type="SMART" id="SM00409">
    <property type="entry name" value="IG"/>
    <property type="match status" value="6"/>
</dbReference>
<dbReference type="SMART" id="SM00408">
    <property type="entry name" value="IGc2"/>
    <property type="match status" value="6"/>
</dbReference>
<dbReference type="SUPFAM" id="SSF49265">
    <property type="entry name" value="Fibronectin type III"/>
    <property type="match status" value="3"/>
</dbReference>
<dbReference type="SUPFAM" id="SSF48726">
    <property type="entry name" value="Immunoglobulin"/>
    <property type="match status" value="6"/>
</dbReference>
<dbReference type="PROSITE" id="PS50853">
    <property type="entry name" value="FN3"/>
    <property type="match status" value="5"/>
</dbReference>
<dbReference type="PROSITE" id="PS50835">
    <property type="entry name" value="IG_LIKE"/>
    <property type="match status" value="6"/>
</dbReference>
<organism>
    <name type="scientific">Drosophila melanogaster</name>
    <name type="common">Fruit fly</name>
    <dbReference type="NCBI Taxonomy" id="7227"/>
    <lineage>
        <taxon>Eukaryota</taxon>
        <taxon>Metazoa</taxon>
        <taxon>Ecdysozoa</taxon>
        <taxon>Arthropoda</taxon>
        <taxon>Hexapoda</taxon>
        <taxon>Insecta</taxon>
        <taxon>Pterygota</taxon>
        <taxon>Neoptera</taxon>
        <taxon>Endopterygota</taxon>
        <taxon>Diptera</taxon>
        <taxon>Brachycera</taxon>
        <taxon>Muscomorpha</taxon>
        <taxon>Ephydroidea</taxon>
        <taxon>Drosophilidae</taxon>
        <taxon>Drosophila</taxon>
        <taxon>Sophophora</taxon>
    </lineage>
</organism>
<gene>
    <name type="primary">Nrg</name>
    <name type="ORF">CG1634</name>
</gene>
<protein>
    <recommendedName>
        <fullName>Neuroglian</fullName>
    </recommendedName>
</protein>
<comment type="function">
    <text evidence="7 12">Essential for septate junctions. Septate junctions, which are the equivalent of vertebrate tight junctions, are characterized by regular arrays of transverse structures that span the intermembrane space and form a physical barrier to diffusion. Required for formation of the hemolymph-brain barrier (the insect blood-brain barrier). Vital for embryonic development. Involved in the targeting for degradation or recycling of certain septate junction components, including kune and bou/boudin, by regulating their endocytosis (PubMed:28977027).</text>
</comment>
<comment type="function">
    <molecule>Isoform B</molecule>
    <text evidence="7">May play a role in neural and glial cell adhesion in the developing embryo.</text>
</comment>
<comment type="function">
    <molecule>Isoform A</molecule>
    <text evidence="7">May be a more general cell adhesion molecule involved in non-neuronal tissues and imaginal disk morphogenesis.</text>
</comment>
<comment type="subunit">
    <text evidence="6 10">Forms a complex with Nrx-IV/Nrx and Cont (PubMed:15459097). Forms a complex composed of septate junction proteins Nrx-IV/Nrx, Tsf2/MTf, Cont and Nrg during late embryogenesis (PubMed:20935638).</text>
</comment>
<comment type="subcellular location">
    <subcellularLocation>
        <location evidence="10">Cell membrane</location>
        <topology evidence="17">Single-pass type I membrane protein</topology>
    </subcellularLocation>
    <subcellularLocation>
        <location evidence="10">Cell junction</location>
        <location evidence="10">Septate junction</location>
    </subcellularLocation>
</comment>
<comment type="alternative products">
    <event type="alternative splicing"/>
    <isoform>
        <id>P20241-1</id>
        <name evidence="18">B</name>
        <name evidence="18">E</name>
        <name evidence="18">I</name>
        <name>180 kDa form</name>
        <name>Nrg180</name>
        <sequence type="displayed"/>
    </isoform>
    <isoform>
        <id>P20241-2</id>
        <name evidence="18">A</name>
        <name evidence="18">C</name>
        <name evidence="18">D</name>
        <name evidence="18">F</name>
        <name evidence="18">H</name>
        <name>167 kDa form</name>
        <name>Nrg167</name>
        <sequence type="described" ref="VSP_002601 VSP_002602"/>
    </isoform>
</comment>
<comment type="tissue specificity">
    <molecule>Isoform B</molecule>
    <text evidence="7">Restricted to the surface of neurons and glia in the developing nervous system.</text>
</comment>
<comment type="tissue specificity">
    <molecule>Isoform A</molecule>
    <text evidence="7">Restricted to non-neuronal tissues.</text>
</comment>
<comment type="developmental stage">
    <text evidence="10">In embryos, expressed in trachea and hindgut (at protein level).</text>
</comment>
<name>NRG_DROME</name>
<evidence type="ECO:0000250" key="1">
    <source>
        <dbReference type="UniProtKB" id="P25033"/>
    </source>
</evidence>
<evidence type="ECO:0000255" key="2"/>
<evidence type="ECO:0000255" key="3">
    <source>
        <dbReference type="PROSITE-ProRule" id="PRU00114"/>
    </source>
</evidence>
<evidence type="ECO:0000255" key="4">
    <source>
        <dbReference type="PROSITE-ProRule" id="PRU00316"/>
    </source>
</evidence>
<evidence type="ECO:0000256" key="5">
    <source>
        <dbReference type="SAM" id="MobiDB-lite"/>
    </source>
</evidence>
<evidence type="ECO:0000269" key="6">
    <source>
    </source>
</evidence>
<evidence type="ECO:0000269" key="7">
    <source>
    </source>
</evidence>
<evidence type="ECO:0000269" key="8">
    <source>
    </source>
</evidence>
<evidence type="ECO:0000269" key="9">
    <source>
    </source>
</evidence>
<evidence type="ECO:0000269" key="10">
    <source>
    </source>
</evidence>
<evidence type="ECO:0000269" key="11">
    <source>
    </source>
</evidence>
<evidence type="ECO:0000269" key="12">
    <source>
    </source>
</evidence>
<evidence type="ECO:0000269" key="13">
    <source>
    </source>
</evidence>
<evidence type="ECO:0000303" key="14">
    <source>
    </source>
</evidence>
<evidence type="ECO:0000303" key="15">
    <source>
    </source>
</evidence>
<evidence type="ECO:0000303" key="16">
    <source>
    </source>
</evidence>
<evidence type="ECO:0000305" key="17"/>
<evidence type="ECO:0000312" key="18">
    <source>
        <dbReference type="FlyBase" id="FBgn0264975"/>
    </source>
</evidence>
<evidence type="ECO:0007829" key="19">
    <source>
        <dbReference type="PDB" id="1CFB"/>
    </source>
</evidence>
<sequence>MWRQSTILAALLVALLCAGSAESKGNRPPRITKQPAPGELLFKVAQQNKESDNPFIIECEADGQPEPEYSWIKNGKKFDWQAYDNRMLRQPGRGTLVITIPKDEDRGHYQCFASNEFGTATSNSVYVRKAELNAFKDEAAKTLEAVEGEPFMLKCAAPDGFPSPTVNWMIQESIDGSIKSINNSRMTLDPEGNLWFSNVTREDASSDFYYACSATSVFRSEYKIGNKVLLDVKQMGVSASQNKHPPVRQYVSRRQSLALRGKRMELFCIYGGTPLPQTVWSKDGQRIQWSDRITQGHYGKSLVIRQTNFDDAGTYTCDVSNGVGNAQSFSIILNVNSVPYFTKEPEIATAAEDEEVVFECRAAGVPEPKISWIHNGKPIEQSTPNPRRTVTDNTIRIINLVKGDTGNYGCNATNSLGYVYKDVYLNVQAEPPTISEAPAAVSTVDGRNVTIKCRVNGSPKPLVKWLRASNWLTGGRYNVQANGDLEIQDVTFSDAGKYTCYAQNKFGEIQADGSLVVKEHTRITQEPQNYEVAAGQSATFRCNEAHDDTLEIEIDWWKDGQSIDFEAQPRFVKTNDNSLTIAKTMELDSGEYTCVARTRLDEATARANLIVQDVPNAPKLTGITCQADKAEIHWEQQGDNRSPILHYTIQFNTSFTPASWDAAYEKVPNTDSSFVVQMSPWANYTFRVIAFNKIGASPPSAHSDSCTTQPDVPFKNPDNVVGQGTEPNNLVISWTPMPEIEHNAPNFHYYVSWKRDIPAAAWENNNIFDWRQNNIVIADQPTFVKYLIKVVAINDRGESNVAAEEVVGYSGEDRPLDAPTNFTMRQITSSTSGYMAWTPVSEESVRGHFKGYKIQTWTENEGEEGLREIHVKGDTHNALVTQFKPDSKNYARILAYNGRFNGPPSAVIDFDTPEGVPSPVQGLDAYPLGSSAFMLHWKKPLYPNGKLTGYKIYYEEVKESYVGERREYDPHITDPRVTRMKMAGLKPNSKYRISITATTKMGEGSEHYIEKTTLKDAVNVAPATPSFSWEQLPSDNGLAKFRINWLPSTEGHPGTHFFTMHRIKGETQWIRENEEKNSDYQEVGGLDPETAYEFRVVSVDGHFNTESATQEIDTNTVEGPIMVANETVANAGWFIGMMLALAFIIILFIIICIIRRNRGGKYDVHDRELANGRRDYPEEGGFHEYSQPLDNKSAGRQSVSSANKPGVESDTDSMAEYGDGDTGQFTEDGSFIGQYVPGKLQPPVSPQPLNNSAAAHQAAPTAGGSGAAGSAAAAGASGGASSAGGAAASNGGAAAGAVATYV</sequence>